<keyword id="KW-0002">3D-structure</keyword>
<keyword id="KW-0025">Alternative splicing</keyword>
<keyword id="KW-0150">Chloroplast</keyword>
<keyword id="KW-0328">Glycosyltransferase</keyword>
<keyword id="KW-0472">Membrane</keyword>
<keyword id="KW-0934">Plastid</keyword>
<keyword id="KW-1001">Plastid inner membrane</keyword>
<keyword id="KW-1185">Reference proteome</keyword>
<keyword id="KW-0808">Transferase</keyword>
<keyword id="KW-0809">Transit peptide</keyword>
<feature type="transit peptide" description="Chloroplast" evidence="2">
    <location>
        <begin position="1"/>
        <end status="unknown"/>
    </location>
</feature>
<feature type="chain" id="PRO_0000349421" description="Monogalactosyldiacylglycerol synthase 1, chloroplastic">
    <location>
        <begin status="unknown"/>
        <end position="533"/>
    </location>
</feature>
<feature type="region of interest" description="Required for binding to diacyl glycerol" evidence="11">
    <location>
        <begin position="192"/>
        <end position="215"/>
    </location>
</feature>
<feature type="binding site" evidence="12">
    <location>
        <position position="155"/>
    </location>
    <ligand>
        <name>a 1,2-diacyl-sn-glycero-3-phospho-(1'-sn-glycerol)</name>
        <dbReference type="ChEBI" id="CHEBI:64716"/>
    </ligand>
</feature>
<feature type="binding site" evidence="11 20">
    <location>
        <position position="155"/>
    </location>
    <ligand>
        <name>UDP</name>
        <dbReference type="ChEBI" id="CHEBI:58223"/>
    </ligand>
</feature>
<feature type="binding site" evidence="12">
    <location>
        <position position="189"/>
    </location>
    <ligand>
        <name>a 1,2-diacyl-sn-glycero-3-phospho-(1'-sn-glycerol)</name>
        <dbReference type="ChEBI" id="CHEBI:64716"/>
    </ligand>
</feature>
<feature type="binding site" evidence="11 20">
    <location>
        <position position="324"/>
    </location>
    <ligand>
        <name>UDP</name>
        <dbReference type="ChEBI" id="CHEBI:58223"/>
    </ligand>
</feature>
<feature type="binding site" evidence="11 20">
    <location>
        <position position="413"/>
    </location>
    <ligand>
        <name>UDP</name>
        <dbReference type="ChEBI" id="CHEBI:58223"/>
    </ligand>
</feature>
<feature type="binding site" evidence="11 20">
    <location>
        <position position="414"/>
    </location>
    <ligand>
        <name>UDP</name>
        <dbReference type="ChEBI" id="CHEBI:58223"/>
    </ligand>
</feature>
<feature type="binding site" evidence="11 20">
    <location>
        <begin position="434"/>
        <end position="438"/>
    </location>
    <ligand>
        <name>UDP</name>
        <dbReference type="ChEBI" id="CHEBI:58223"/>
    </ligand>
</feature>
<feature type="binding site" evidence="11 20">
    <location>
        <position position="456"/>
    </location>
    <ligand>
        <name>UDP</name>
        <dbReference type="ChEBI" id="CHEBI:58223"/>
    </ligand>
</feature>
<feature type="splice variant" id="VSP_035387" description="In isoform 2." evidence="15">
    <original>EAGNVPYVVENGCGKFSKSPKEISKIVADWFGPASKELEIMSQNALRLA</original>
    <variation>VSRECTVRGGKRMWEILKITERDIEDCSGLVWTGIERVGDNVTECIEAG</variation>
    <location>
        <begin position="456"/>
        <end position="504"/>
    </location>
</feature>
<feature type="splice variant" id="VSP_035388" description="In isoform 2." evidence="15">
    <location>
        <begin position="505"/>
        <end position="533"/>
    </location>
</feature>
<feature type="mutagenesis site" description="No effect on enzyme activation by phosphatidate (PA) and phosphatidylglycerol (PG)." evidence="8">
    <original>D</original>
    <variation>E</variation>
    <location>
        <position position="150"/>
    </location>
</feature>
<feature type="mutagenesis site" description="Slight increase of enzyme activation by phosphatidylglycerol (PG)." evidence="8">
    <original>D</original>
    <variation>N</variation>
    <location>
        <position position="150"/>
    </location>
</feature>
<feature type="mutagenesis site" description="Abolishes catalytic activity." evidence="8">
    <original>H</original>
    <variation>A</variation>
    <variation>R</variation>
    <location>
        <position position="155"/>
    </location>
</feature>
<feature type="mutagenesis site" description="Abolishes enzyme activation by phosphatidylglycerol (PG), and reduces enzyme activation by phosphatidate (PA)1.5-fold." evidence="8">
    <original>T</original>
    <variation>A</variation>
    <location>
        <position position="186"/>
    </location>
</feature>
<feature type="mutagenesis site" description="Reduces enzyme activation by phosphatidylglycerol (PG) 2-fold." evidence="8">
    <original>P</original>
    <variation>A</variation>
    <location>
        <position position="189"/>
    </location>
</feature>
<feature type="mutagenesis site" description="Almost abolishes catalytic activity and binding to diacyl glycerol." evidence="11">
    <location>
        <begin position="192"/>
        <end position="215"/>
    </location>
</feature>
<feature type="mutagenesis site" description="Reduces enzyme activation by phosphatidate (PA) and phosphatidylglycerol (PG) 4-fold." evidence="8">
    <original>H</original>
    <variation>A</variation>
    <location>
        <position position="251"/>
    </location>
</feature>
<feature type="mutagenesis site" description="Slight increase of enzyme activation by phosphatidylglycerol (PG)." evidence="8">
    <original>R</original>
    <variation>A</variation>
    <location>
        <position position="260"/>
    </location>
</feature>
<feature type="mutagenesis site" description="Reduces catalytic activity 25-fold." evidence="11">
    <original>D</original>
    <variation>E</variation>
    <location>
        <position position="279"/>
    </location>
</feature>
<feature type="mutagenesis site" description="Reduces catalytic activity 50-fold." evidence="11">
    <original>D</original>
    <variation>N</variation>
    <location>
        <position position="279"/>
    </location>
</feature>
<feature type="mutagenesis site" description="Abolishes enzyme activation by phosphatidylglycerol (PG), and reduces enzyme activation by phosphatidate (PA)3-fold.">
    <original>W</original>
    <variation>A</variation>
    <location>
        <position position="287"/>
    </location>
</feature>
<feature type="mutagenesis site" description="Abolishes catalytic activity." evidence="11">
    <original>K</original>
    <variation>R</variation>
    <location>
        <position position="430"/>
    </location>
</feature>
<feature type="mutagenesis site" description="Reduces catalytic activity 20-fold." evidence="11">
    <original>P</original>
    <variation>A</variation>
    <location>
        <position position="433"/>
    </location>
</feature>
<feature type="mutagenesis site" description="Reduces catalytic activity 1.5-fold." evidence="11">
    <original>T</original>
    <variation>A</variation>
    <location>
        <position position="435"/>
    </location>
</feature>
<feature type="mutagenesis site" description="Reduces catalytic activity 7-fold." evidence="11">
    <original>Q</original>
    <variation>N</variation>
    <location>
        <position position="455"/>
    </location>
</feature>
<feature type="mutagenesis site" description="Abolishes catalytic activity." evidence="11">
    <original>E</original>
    <variation>N</variation>
    <location>
        <position position="456"/>
    </location>
</feature>
<feature type="mutagenesis site" description="Reduces enzyme activation by phosphatidate (PA) and phosphatidylglycerol (PG) 15-fold." evidence="8">
    <original>E</original>
    <variation>N</variation>
    <location>
        <position position="456"/>
    </location>
</feature>
<feature type="strand" evidence="22">
    <location>
        <begin position="143"/>
        <end position="147"/>
    </location>
</feature>
<feature type="turn" evidence="22">
    <location>
        <begin position="150"/>
        <end position="153"/>
    </location>
</feature>
<feature type="helix" evidence="22">
    <location>
        <begin position="156"/>
        <end position="170"/>
    </location>
</feature>
<feature type="helix" evidence="22">
    <location>
        <begin position="171"/>
        <end position="173"/>
    </location>
</feature>
<feature type="strand" evidence="22">
    <location>
        <begin position="175"/>
        <end position="178"/>
    </location>
</feature>
<feature type="helix" evidence="21">
    <location>
        <begin position="232"/>
        <end position="242"/>
    </location>
</feature>
<feature type="strand" evidence="22">
    <location>
        <begin position="245"/>
        <end position="249"/>
    </location>
</feature>
<feature type="turn" evidence="21">
    <location>
        <begin position="252"/>
        <end position="255"/>
    </location>
</feature>
<feature type="helix" evidence="22">
    <location>
        <begin position="256"/>
        <end position="263"/>
    </location>
</feature>
<feature type="turn" evidence="21">
    <location>
        <begin position="264"/>
        <end position="266"/>
    </location>
</feature>
<feature type="turn" evidence="22">
    <location>
        <begin position="268"/>
        <end position="270"/>
    </location>
</feature>
<feature type="strand" evidence="22">
    <location>
        <begin position="271"/>
        <end position="276"/>
    </location>
</feature>
<feature type="strand" evidence="21">
    <location>
        <begin position="280"/>
        <end position="282"/>
    </location>
</feature>
<feature type="helix" evidence="22">
    <location>
        <begin position="285"/>
        <end position="287"/>
    </location>
</feature>
<feature type="strand" evidence="22">
    <location>
        <begin position="293"/>
        <end position="296"/>
    </location>
</feature>
<feature type="helix" evidence="22">
    <location>
        <begin position="300"/>
        <end position="309"/>
    </location>
</feature>
<feature type="helix" evidence="22">
    <location>
        <begin position="313"/>
        <end position="315"/>
    </location>
</feature>
<feature type="strand" evidence="21">
    <location>
        <begin position="316"/>
        <end position="318"/>
    </location>
</feature>
<feature type="turn" evidence="22">
    <location>
        <begin position="325"/>
        <end position="327"/>
    </location>
</feature>
<feature type="helix" evidence="22">
    <location>
        <begin position="334"/>
        <end position="341"/>
    </location>
</feature>
<feature type="strand" evidence="22">
    <location>
        <begin position="345"/>
        <end position="347"/>
    </location>
</feature>
<feature type="strand" evidence="22">
    <location>
        <begin position="349"/>
        <end position="353"/>
    </location>
</feature>
<feature type="turn" evidence="22">
    <location>
        <begin position="355"/>
        <end position="358"/>
    </location>
</feature>
<feature type="helix" evidence="22">
    <location>
        <begin position="362"/>
        <end position="372"/>
    </location>
</feature>
<feature type="turn" evidence="22">
    <location>
        <begin position="376"/>
        <end position="379"/>
    </location>
</feature>
<feature type="strand" evidence="22">
    <location>
        <begin position="380"/>
        <end position="382"/>
    </location>
</feature>
<feature type="strand" evidence="22">
    <location>
        <begin position="384"/>
        <end position="388"/>
    </location>
</feature>
<feature type="helix" evidence="22">
    <location>
        <begin position="393"/>
        <end position="401"/>
    </location>
</feature>
<feature type="strand" evidence="22">
    <location>
        <begin position="408"/>
        <end position="412"/>
    </location>
</feature>
<feature type="helix" evidence="22">
    <location>
        <begin position="417"/>
        <end position="422"/>
    </location>
</feature>
<feature type="strand" evidence="22">
    <location>
        <begin position="425"/>
        <end position="429"/>
    </location>
</feature>
<feature type="helix" evidence="22">
    <location>
        <begin position="433"/>
        <end position="441"/>
    </location>
</feature>
<feature type="strand" evidence="22">
    <location>
        <begin position="446"/>
        <end position="448"/>
    </location>
</feature>
<feature type="turn" evidence="22">
    <location>
        <begin position="453"/>
        <end position="458"/>
    </location>
</feature>
<feature type="helix" evidence="22">
    <location>
        <begin position="459"/>
        <end position="464"/>
    </location>
</feature>
<feature type="turn" evidence="22">
    <location>
        <begin position="465"/>
        <end position="467"/>
    </location>
</feature>
<feature type="strand" evidence="22">
    <location>
        <begin position="468"/>
        <end position="471"/>
    </location>
</feature>
<feature type="helix" evidence="22">
    <location>
        <begin position="475"/>
        <end position="485"/>
    </location>
</feature>
<feature type="turn" evidence="22">
    <location>
        <begin position="486"/>
        <end position="489"/>
    </location>
</feature>
<feature type="helix" evidence="22">
    <location>
        <begin position="490"/>
        <end position="503"/>
    </location>
</feature>
<feature type="helix" evidence="22">
    <location>
        <begin position="508"/>
        <end position="520"/>
    </location>
</feature>
<feature type="turn" evidence="22">
    <location>
        <begin position="521"/>
        <end position="523"/>
    </location>
</feature>
<evidence type="ECO:0000250" key="1"/>
<evidence type="ECO:0000255" key="2"/>
<evidence type="ECO:0000269" key="3">
    <source>
    </source>
</evidence>
<evidence type="ECO:0000269" key="4">
    <source>
    </source>
</evidence>
<evidence type="ECO:0000269" key="5">
    <source>
    </source>
</evidence>
<evidence type="ECO:0000269" key="6">
    <source>
    </source>
</evidence>
<evidence type="ECO:0000269" key="7">
    <source>
    </source>
</evidence>
<evidence type="ECO:0000269" key="8">
    <source>
    </source>
</evidence>
<evidence type="ECO:0000269" key="9">
    <source>
    </source>
</evidence>
<evidence type="ECO:0000269" key="10">
    <source>
    </source>
</evidence>
<evidence type="ECO:0000269" key="11">
    <source>
    </source>
</evidence>
<evidence type="ECO:0000269" key="12">
    <source>
    </source>
</evidence>
<evidence type="ECO:0000303" key="13">
    <source>
    </source>
</evidence>
<evidence type="ECO:0000303" key="14">
    <source>
    </source>
</evidence>
<evidence type="ECO:0000305" key="15"/>
<evidence type="ECO:0000305" key="16">
    <source>
    </source>
</evidence>
<evidence type="ECO:0000305" key="17">
    <source>
    </source>
</evidence>
<evidence type="ECO:0000312" key="18">
    <source>
        <dbReference type="Araport" id="AT4G31780"/>
    </source>
</evidence>
<evidence type="ECO:0000312" key="19">
    <source>
        <dbReference type="EMBL" id="CAA19745.1"/>
    </source>
</evidence>
<evidence type="ECO:0007744" key="20">
    <source>
        <dbReference type="PDB" id="4X1T"/>
    </source>
</evidence>
<evidence type="ECO:0007829" key="21">
    <source>
        <dbReference type="PDB" id="4WYI"/>
    </source>
</evidence>
<evidence type="ECO:0007829" key="22">
    <source>
        <dbReference type="PDB" id="4X1T"/>
    </source>
</evidence>
<dbReference type="EC" id="2.4.1.46" evidence="8 11"/>
<dbReference type="EMBL" id="AF241797">
    <property type="protein sequence ID" value="AAF65066.1"/>
    <property type="molecule type" value="mRNA"/>
</dbReference>
<dbReference type="EMBL" id="AB047399">
    <property type="protein sequence ID" value="BAB12042.1"/>
    <property type="molecule type" value="mRNA"/>
</dbReference>
<dbReference type="EMBL" id="KJ138730">
    <property type="protein sequence ID" value="AHL38670.1"/>
    <property type="molecule type" value="mRNA"/>
</dbReference>
<dbReference type="EMBL" id="AL031004">
    <property type="protein sequence ID" value="CAA19745.1"/>
    <property type="molecule type" value="Genomic_DNA"/>
</dbReference>
<dbReference type="EMBL" id="AL161579">
    <property type="protein sequence ID" value="CAB79896.1"/>
    <property type="molecule type" value="Genomic_DNA"/>
</dbReference>
<dbReference type="EMBL" id="CP002687">
    <property type="protein sequence ID" value="AEE85956.1"/>
    <property type="molecule type" value="Genomic_DNA"/>
</dbReference>
<dbReference type="EMBL" id="AY092965">
    <property type="protein sequence ID" value="AAM12964.1"/>
    <property type="molecule type" value="mRNA"/>
</dbReference>
<dbReference type="EMBL" id="BT008890">
    <property type="protein sequence ID" value="AAP68329.1"/>
    <property type="molecule type" value="mRNA"/>
</dbReference>
<dbReference type="PIR" id="T05092">
    <property type="entry name" value="T05092"/>
</dbReference>
<dbReference type="RefSeq" id="NP_194906.1">
    <molecule id="O81770-1"/>
    <property type="nucleotide sequence ID" value="NM_119327.3"/>
</dbReference>
<dbReference type="PDB" id="4WYI">
    <property type="method" value="X-ray"/>
    <property type="resolution" value="2.50 A"/>
    <property type="chains" value="A=137-533"/>
</dbReference>
<dbReference type="PDB" id="4X1T">
    <property type="method" value="X-ray"/>
    <property type="resolution" value="2.25 A"/>
    <property type="chains" value="A=137-533"/>
</dbReference>
<dbReference type="PDBsum" id="4WYI"/>
<dbReference type="PDBsum" id="4X1T"/>
<dbReference type="SMR" id="O81770"/>
<dbReference type="FunCoup" id="O81770">
    <property type="interactions" value="444"/>
</dbReference>
<dbReference type="STRING" id="3702.O81770"/>
<dbReference type="SwissLipids" id="SLP:000001440"/>
<dbReference type="CAZy" id="GT28">
    <property type="family name" value="Glycosyltransferase Family 28"/>
</dbReference>
<dbReference type="PaxDb" id="3702-AT4G31780.2"/>
<dbReference type="ProteomicsDB" id="238894">
    <molecule id="O81770-1"/>
</dbReference>
<dbReference type="EnsemblPlants" id="AT4G31780.2">
    <molecule id="O81770-1"/>
    <property type="protein sequence ID" value="AT4G31780.2"/>
    <property type="gene ID" value="AT4G31780"/>
</dbReference>
<dbReference type="GeneID" id="829306"/>
<dbReference type="Gramene" id="AT4G31780.2">
    <molecule id="O81770-1"/>
    <property type="protein sequence ID" value="AT4G31780.2"/>
    <property type="gene ID" value="AT4G31780"/>
</dbReference>
<dbReference type="KEGG" id="ath:AT4G31780"/>
<dbReference type="Araport" id="AT4G31780"/>
<dbReference type="TAIR" id="AT4G31780">
    <property type="gene designation" value="MGD1"/>
</dbReference>
<dbReference type="eggNOG" id="ENOG502QPXV">
    <property type="taxonomic scope" value="Eukaryota"/>
</dbReference>
<dbReference type="HOGENOM" id="CLU_028367_3_1_1"/>
<dbReference type="InParanoid" id="O81770"/>
<dbReference type="PhylomeDB" id="O81770"/>
<dbReference type="BioCyc" id="MetaCyc:AT4G31780-MONOMER"/>
<dbReference type="BRENDA" id="2.4.1.336">
    <property type="organism ID" value="399"/>
</dbReference>
<dbReference type="BRENDA" id="2.4.1.46">
    <property type="organism ID" value="399"/>
</dbReference>
<dbReference type="EvolutionaryTrace" id="O81770"/>
<dbReference type="PRO" id="PR:O81770"/>
<dbReference type="Proteomes" id="UP000006548">
    <property type="component" value="Chromosome 4"/>
</dbReference>
<dbReference type="ExpressionAtlas" id="O81770">
    <property type="expression patterns" value="baseline and differential"/>
</dbReference>
<dbReference type="GO" id="GO:0009941">
    <property type="term" value="C:chloroplast envelope"/>
    <property type="evidence" value="ECO:0007005"/>
    <property type="project" value="TAIR"/>
</dbReference>
<dbReference type="GO" id="GO:0009706">
    <property type="term" value="C:chloroplast inner membrane"/>
    <property type="evidence" value="ECO:0000314"/>
    <property type="project" value="TAIR"/>
</dbReference>
<dbReference type="GO" id="GO:0005886">
    <property type="term" value="C:plasma membrane"/>
    <property type="evidence" value="ECO:0007005"/>
    <property type="project" value="TAIR"/>
</dbReference>
<dbReference type="GO" id="GO:0009536">
    <property type="term" value="C:plastid"/>
    <property type="evidence" value="ECO:0007005"/>
    <property type="project" value="TAIR"/>
</dbReference>
<dbReference type="GO" id="GO:0046509">
    <property type="term" value="F:1,2-diacylglycerol 3-beta-galactosyltransferase activity"/>
    <property type="evidence" value="ECO:0000315"/>
    <property type="project" value="TAIR"/>
</dbReference>
<dbReference type="GO" id="GO:0035250">
    <property type="term" value="F:UDP-galactosyltransferase activity"/>
    <property type="evidence" value="ECO:0000304"/>
    <property type="project" value="TAIR"/>
</dbReference>
<dbReference type="GO" id="GO:0008194">
    <property type="term" value="F:UDP-glycosyltransferase activity"/>
    <property type="evidence" value="ECO:0000314"/>
    <property type="project" value="TAIR"/>
</dbReference>
<dbReference type="GO" id="GO:0009793">
    <property type="term" value="P:embryo development ending in seed dormancy"/>
    <property type="evidence" value="ECO:0000315"/>
    <property type="project" value="TAIR"/>
</dbReference>
<dbReference type="GO" id="GO:0009247">
    <property type="term" value="P:glycolipid biosynthetic process"/>
    <property type="evidence" value="ECO:0000314"/>
    <property type="project" value="TAIR"/>
</dbReference>
<dbReference type="GO" id="GO:0010027">
    <property type="term" value="P:thylakoid membrane organization"/>
    <property type="evidence" value="ECO:0000315"/>
    <property type="project" value="TAIR"/>
</dbReference>
<dbReference type="CDD" id="cd17507">
    <property type="entry name" value="GT28_Beta-DGS-like"/>
    <property type="match status" value="1"/>
</dbReference>
<dbReference type="FunFam" id="3.40.50.2000:FF:000111">
    <property type="entry name" value="Monogalactosyldiacylglycerol synthase 3, chloroplastic"/>
    <property type="match status" value="1"/>
</dbReference>
<dbReference type="Gene3D" id="3.40.50.2000">
    <property type="entry name" value="Glycogen Phosphorylase B"/>
    <property type="match status" value="1"/>
</dbReference>
<dbReference type="InterPro" id="IPR009695">
    <property type="entry name" value="Diacylglyc_glucosyltr_N"/>
</dbReference>
<dbReference type="InterPro" id="IPR007235">
    <property type="entry name" value="Glyco_trans_28_C"/>
</dbReference>
<dbReference type="InterPro" id="IPR050519">
    <property type="entry name" value="Glycosyltransf_28_UgtP"/>
</dbReference>
<dbReference type="PANTHER" id="PTHR43025">
    <property type="entry name" value="MONOGALACTOSYLDIACYLGLYCEROL SYNTHASE"/>
    <property type="match status" value="1"/>
</dbReference>
<dbReference type="PANTHER" id="PTHR43025:SF3">
    <property type="entry name" value="MONOGALACTOSYLDIACYLGLYCEROL SYNTHASE 1, CHLOROPLASTIC"/>
    <property type="match status" value="1"/>
</dbReference>
<dbReference type="Pfam" id="PF04101">
    <property type="entry name" value="Glyco_tran_28_C"/>
    <property type="match status" value="1"/>
</dbReference>
<dbReference type="Pfam" id="PF06925">
    <property type="entry name" value="MGDG_synth"/>
    <property type="match status" value="1"/>
</dbReference>
<dbReference type="SUPFAM" id="SSF53756">
    <property type="entry name" value="UDP-Glycosyltransferase/glycogen phosphorylase"/>
    <property type="match status" value="1"/>
</dbReference>
<protein>
    <recommendedName>
        <fullName evidence="15">Monogalactosyldiacylglycerol synthase 1, chloroplastic</fullName>
        <shortName evidence="14">AtMGD1</shortName>
        <ecNumber evidence="8 11">2.4.1.46</ecNumber>
    </recommendedName>
    <alternativeName>
        <fullName evidence="14">MGDG synthase type A</fullName>
    </alternativeName>
    <alternativeName>
        <fullName evidence="15">Protein EMBRYO DEFECTIVE 2797</fullName>
    </alternativeName>
</protein>
<organism>
    <name type="scientific">Arabidopsis thaliana</name>
    <name type="common">Mouse-ear cress</name>
    <dbReference type="NCBI Taxonomy" id="3702"/>
    <lineage>
        <taxon>Eukaryota</taxon>
        <taxon>Viridiplantae</taxon>
        <taxon>Streptophyta</taxon>
        <taxon>Embryophyta</taxon>
        <taxon>Tracheophyta</taxon>
        <taxon>Spermatophyta</taxon>
        <taxon>Magnoliopsida</taxon>
        <taxon>eudicotyledons</taxon>
        <taxon>Gunneridae</taxon>
        <taxon>Pentapetalae</taxon>
        <taxon>rosids</taxon>
        <taxon>malvids</taxon>
        <taxon>Brassicales</taxon>
        <taxon>Brassicaceae</taxon>
        <taxon>Camelineae</taxon>
        <taxon>Arabidopsis</taxon>
    </lineage>
</organism>
<sequence>MQNPSTVTQESAAPVFDFFPRLRGLTSRNRSPCSNSDGYALSSSNALYFNGFRTLPSRRMGKTLASLSFNTKSSAGSSLRRFISDFNSFIRFHCDKVVPESFASVGGVGLSSDENGIRENGTGGVLGEEGLPLNGVEADRPKKVLILMSDTGGGHRASAEAIRAAFNQEFGDEYQVFITDLWTDHTPWPFNQLPRSYNFLVKHGTLWKMTYYGTSPRIVHQSNFAATSTFIAREIAQGLMKYQPDIIISVHPLMQHVPLRVLRSKGLLKKIVFTTVITDLSTCHPTWFHKLVTRCYCPSTEVAKRAQKAGLETSQIKVYGLPVRPSFVKPVRPKVELRRELGMDENLPAVLLMGGGEGMGPIEATARALADALYDKNLGEAVGQVLIICGRNKKLQSKLSSLDWKIPVQVKGFITKMEECMGACDCIITKAGPGTIAEAMIRGLPIILNGYIAGQEAGNVPYVVENGCGKFSKSPKEISKIVADWFGPASKELEIMSQNALRLAKPEAVFKIVHDMHELVRKKNSLPQLSCTA</sequence>
<reference key="1">
    <citation type="journal article" date="2000" name="Proc. Natl. Acad. Sci. U.S.A.">
        <title>Galactolipid deficiency and abnormal chloroplast development in the Arabidopsis MGD synthase 1 mutant.</title>
        <authorList>
            <person name="Jarvis P."/>
            <person name="Doermann P."/>
            <person name="Peto C.A."/>
            <person name="Lutes J."/>
            <person name="Benning C."/>
            <person name="Chory J."/>
        </authorList>
    </citation>
    <scope>NUCLEOTIDE SEQUENCE [MRNA] (ISOFORM 1)</scope>
    <scope>FUNCTION</scope>
    <scope>DISRUPTION PHENOTYPE</scope>
    <source>
        <strain>cv. Columbia</strain>
    </source>
</reference>
<reference key="2">
    <citation type="journal article" date="2001" name="Proc. Natl. Acad. Sci. U.S.A.">
        <title>Two types of MGDG synthase genes, found widely in both 16:3 and 18:3 plants, differentially mediate galactolipid syntheses in photosynthetic and nonphotosynthetic tissues in Arabidopsis thaliana.</title>
        <authorList>
            <person name="Awai K."/>
            <person name="Marechal E."/>
            <person name="Block M.A."/>
            <person name="Brun D."/>
            <person name="Masuda T."/>
            <person name="Shimada H."/>
            <person name="Takamiya K."/>
            <person name="Ohta H."/>
            <person name="Joyard J."/>
        </authorList>
    </citation>
    <scope>NUCLEOTIDE SEQUENCE [MRNA] (ISOFORM 1)</scope>
    <scope>FUNCTION</scope>
    <scope>SUBCELLULAR LOCATION</scope>
    <scope>TISSUE SPECIFICITY</scope>
    <scope>DEVELOPMENTAL STAGE</scope>
    <scope>INDUCTION</scope>
</reference>
<reference key="3">
    <citation type="journal article" date="2014" name="Plant J.">
        <title>The plant glycosyltransferase clone collection for functional genomics.</title>
        <authorList>
            <person name="Lao J."/>
            <person name="Oikawa A."/>
            <person name="Bromley J.R."/>
            <person name="McInerney P."/>
            <person name="Suttangkakul A."/>
            <person name="Smith-Moritz A.M."/>
            <person name="Plahar H."/>
            <person name="Chiu T.-Y."/>
            <person name="Gonzalez Fernandez-Nino S.M.G."/>
            <person name="Ebert B."/>
            <person name="Yang F."/>
            <person name="Christiansen K.M."/>
            <person name="Hansen S.F."/>
            <person name="Stonebloom S."/>
            <person name="Adams P.D."/>
            <person name="Ronald P.C."/>
            <person name="Hillson N.J."/>
            <person name="Hadi M.Z."/>
            <person name="Vega-Sanchez M.E."/>
            <person name="Loque D."/>
            <person name="Scheller H.V."/>
            <person name="Heazlewood J.L."/>
        </authorList>
    </citation>
    <scope>NUCLEOTIDE SEQUENCE [MRNA]</scope>
</reference>
<reference key="4">
    <citation type="journal article" date="1999" name="Nature">
        <title>Sequence and analysis of chromosome 4 of the plant Arabidopsis thaliana.</title>
        <authorList>
            <person name="Mayer K.F.X."/>
            <person name="Schueller C."/>
            <person name="Wambutt R."/>
            <person name="Murphy G."/>
            <person name="Volckaert G."/>
            <person name="Pohl T."/>
            <person name="Duesterhoeft A."/>
            <person name="Stiekema W."/>
            <person name="Entian K.-D."/>
            <person name="Terryn N."/>
            <person name="Harris B."/>
            <person name="Ansorge W."/>
            <person name="Brandt P."/>
            <person name="Grivell L.A."/>
            <person name="Rieger M."/>
            <person name="Weichselgartner M."/>
            <person name="de Simone V."/>
            <person name="Obermaier B."/>
            <person name="Mache R."/>
            <person name="Mueller M."/>
            <person name="Kreis M."/>
            <person name="Delseny M."/>
            <person name="Puigdomenech P."/>
            <person name="Watson M."/>
            <person name="Schmidtheini T."/>
            <person name="Reichert B."/>
            <person name="Portetelle D."/>
            <person name="Perez-Alonso M."/>
            <person name="Boutry M."/>
            <person name="Bancroft I."/>
            <person name="Vos P."/>
            <person name="Hoheisel J."/>
            <person name="Zimmermann W."/>
            <person name="Wedler H."/>
            <person name="Ridley P."/>
            <person name="Langham S.-A."/>
            <person name="McCullagh B."/>
            <person name="Bilham L."/>
            <person name="Robben J."/>
            <person name="van der Schueren J."/>
            <person name="Grymonprez B."/>
            <person name="Chuang Y.-J."/>
            <person name="Vandenbussche F."/>
            <person name="Braeken M."/>
            <person name="Weltjens I."/>
            <person name="Voet M."/>
            <person name="Bastiaens I."/>
            <person name="Aert R."/>
            <person name="Defoor E."/>
            <person name="Weitzenegger T."/>
            <person name="Bothe G."/>
            <person name="Ramsperger U."/>
            <person name="Hilbert H."/>
            <person name="Braun M."/>
            <person name="Holzer E."/>
            <person name="Brandt A."/>
            <person name="Peters S."/>
            <person name="van Staveren M."/>
            <person name="Dirkse W."/>
            <person name="Mooijman P."/>
            <person name="Klein Lankhorst R."/>
            <person name="Rose M."/>
            <person name="Hauf J."/>
            <person name="Koetter P."/>
            <person name="Berneiser S."/>
            <person name="Hempel S."/>
            <person name="Feldpausch M."/>
            <person name="Lamberth S."/>
            <person name="Van den Daele H."/>
            <person name="De Keyser A."/>
            <person name="Buysshaert C."/>
            <person name="Gielen J."/>
            <person name="Villarroel R."/>
            <person name="De Clercq R."/>
            <person name="van Montagu M."/>
            <person name="Rogers J."/>
            <person name="Cronin A."/>
            <person name="Quail M.A."/>
            <person name="Bray-Allen S."/>
            <person name="Clark L."/>
            <person name="Doggett J."/>
            <person name="Hall S."/>
            <person name="Kay M."/>
            <person name="Lennard N."/>
            <person name="McLay K."/>
            <person name="Mayes R."/>
            <person name="Pettett A."/>
            <person name="Rajandream M.A."/>
            <person name="Lyne M."/>
            <person name="Benes V."/>
            <person name="Rechmann S."/>
            <person name="Borkova D."/>
            <person name="Bloecker H."/>
            <person name="Scharfe M."/>
            <person name="Grimm M."/>
            <person name="Loehnert T.-H."/>
            <person name="Dose S."/>
            <person name="de Haan M."/>
            <person name="Maarse A.C."/>
            <person name="Schaefer M."/>
            <person name="Mueller-Auer S."/>
            <person name="Gabel C."/>
            <person name="Fuchs M."/>
            <person name="Fartmann B."/>
            <person name="Granderath K."/>
            <person name="Dauner D."/>
            <person name="Herzl A."/>
            <person name="Neumann S."/>
            <person name="Argiriou A."/>
            <person name="Vitale D."/>
            <person name="Liguori R."/>
            <person name="Piravandi E."/>
            <person name="Massenet O."/>
            <person name="Quigley F."/>
            <person name="Clabauld G."/>
            <person name="Muendlein A."/>
            <person name="Felber R."/>
            <person name="Schnabl S."/>
            <person name="Hiller R."/>
            <person name="Schmidt W."/>
            <person name="Lecharny A."/>
            <person name="Aubourg S."/>
            <person name="Chefdor F."/>
            <person name="Cooke R."/>
            <person name="Berger C."/>
            <person name="Monfort A."/>
            <person name="Casacuberta E."/>
            <person name="Gibbons T."/>
            <person name="Weber N."/>
            <person name="Vandenbol M."/>
            <person name="Bargues M."/>
            <person name="Terol J."/>
            <person name="Torres A."/>
            <person name="Perez-Perez A."/>
            <person name="Purnelle B."/>
            <person name="Bent E."/>
            <person name="Johnson S."/>
            <person name="Tacon D."/>
            <person name="Jesse T."/>
            <person name="Heijnen L."/>
            <person name="Schwarz S."/>
            <person name="Scholler P."/>
            <person name="Heber S."/>
            <person name="Francs P."/>
            <person name="Bielke C."/>
            <person name="Frishman D."/>
            <person name="Haase D."/>
            <person name="Lemcke K."/>
            <person name="Mewes H.-W."/>
            <person name="Stocker S."/>
            <person name="Zaccaria P."/>
            <person name="Bevan M."/>
            <person name="Wilson R.K."/>
            <person name="de la Bastide M."/>
            <person name="Habermann K."/>
            <person name="Parnell L."/>
            <person name="Dedhia N."/>
            <person name="Gnoj L."/>
            <person name="Schutz K."/>
            <person name="Huang E."/>
            <person name="Spiegel L."/>
            <person name="Sekhon M."/>
            <person name="Murray J."/>
            <person name="Sheet P."/>
            <person name="Cordes M."/>
            <person name="Abu-Threideh J."/>
            <person name="Stoneking T."/>
            <person name="Kalicki J."/>
            <person name="Graves T."/>
            <person name="Harmon G."/>
            <person name="Edwards J."/>
            <person name="Latreille P."/>
            <person name="Courtney L."/>
            <person name="Cloud J."/>
            <person name="Abbott A."/>
            <person name="Scott K."/>
            <person name="Johnson D."/>
            <person name="Minx P."/>
            <person name="Bentley D."/>
            <person name="Fulton B."/>
            <person name="Miller N."/>
            <person name="Greco T."/>
            <person name="Kemp K."/>
            <person name="Kramer J."/>
            <person name="Fulton L."/>
            <person name="Mardis E."/>
            <person name="Dante M."/>
            <person name="Pepin K."/>
            <person name="Hillier L.W."/>
            <person name="Nelson J."/>
            <person name="Spieth J."/>
            <person name="Ryan E."/>
            <person name="Andrews S."/>
            <person name="Geisel C."/>
            <person name="Layman D."/>
            <person name="Du H."/>
            <person name="Ali J."/>
            <person name="Berghoff A."/>
            <person name="Jones K."/>
            <person name="Drone K."/>
            <person name="Cotton M."/>
            <person name="Joshu C."/>
            <person name="Antonoiu B."/>
            <person name="Zidanic M."/>
            <person name="Strong C."/>
            <person name="Sun H."/>
            <person name="Lamar B."/>
            <person name="Yordan C."/>
            <person name="Ma P."/>
            <person name="Zhong J."/>
            <person name="Preston R."/>
            <person name="Vil D."/>
            <person name="Shekher M."/>
            <person name="Matero A."/>
            <person name="Shah R."/>
            <person name="Swaby I.K."/>
            <person name="O'Shaughnessy A."/>
            <person name="Rodriguez M."/>
            <person name="Hoffman J."/>
            <person name="Till S."/>
            <person name="Granat S."/>
            <person name="Shohdy N."/>
            <person name="Hasegawa A."/>
            <person name="Hameed A."/>
            <person name="Lodhi M."/>
            <person name="Johnson A."/>
            <person name="Chen E."/>
            <person name="Marra M.A."/>
            <person name="Martienssen R."/>
            <person name="McCombie W.R."/>
        </authorList>
    </citation>
    <scope>NUCLEOTIDE SEQUENCE [LARGE SCALE GENOMIC DNA]</scope>
    <source>
        <strain>cv. Columbia</strain>
    </source>
</reference>
<reference key="5">
    <citation type="journal article" date="2017" name="Plant J.">
        <title>Araport11: a complete reannotation of the Arabidopsis thaliana reference genome.</title>
        <authorList>
            <person name="Cheng C.Y."/>
            <person name="Krishnakumar V."/>
            <person name="Chan A.P."/>
            <person name="Thibaud-Nissen F."/>
            <person name="Schobel S."/>
            <person name="Town C.D."/>
        </authorList>
    </citation>
    <scope>GENOME REANNOTATION</scope>
    <source>
        <strain>cv. Columbia</strain>
    </source>
</reference>
<reference key="6">
    <citation type="journal article" date="2003" name="Science">
        <title>Empirical analysis of transcriptional activity in the Arabidopsis genome.</title>
        <authorList>
            <person name="Yamada K."/>
            <person name="Lim J."/>
            <person name="Dale J.M."/>
            <person name="Chen H."/>
            <person name="Shinn P."/>
            <person name="Palm C.J."/>
            <person name="Southwick A.M."/>
            <person name="Wu H.C."/>
            <person name="Kim C.J."/>
            <person name="Nguyen M."/>
            <person name="Pham P.K."/>
            <person name="Cheuk R.F."/>
            <person name="Karlin-Newmann G."/>
            <person name="Liu S.X."/>
            <person name="Lam B."/>
            <person name="Sakano H."/>
            <person name="Wu T."/>
            <person name="Yu G."/>
            <person name="Miranda M."/>
            <person name="Quach H.L."/>
            <person name="Tripp M."/>
            <person name="Chang C.H."/>
            <person name="Lee J.M."/>
            <person name="Toriumi M.J."/>
            <person name="Chan M.M."/>
            <person name="Tang C.C."/>
            <person name="Onodera C.S."/>
            <person name="Deng J.M."/>
            <person name="Akiyama K."/>
            <person name="Ansari Y."/>
            <person name="Arakawa T."/>
            <person name="Banh J."/>
            <person name="Banno F."/>
            <person name="Bowser L."/>
            <person name="Brooks S.Y."/>
            <person name="Carninci P."/>
            <person name="Chao Q."/>
            <person name="Choy N."/>
            <person name="Enju A."/>
            <person name="Goldsmith A.D."/>
            <person name="Gurjal M."/>
            <person name="Hansen N.F."/>
            <person name="Hayashizaki Y."/>
            <person name="Johnson-Hopson C."/>
            <person name="Hsuan V.W."/>
            <person name="Iida K."/>
            <person name="Karnes M."/>
            <person name="Khan S."/>
            <person name="Koesema E."/>
            <person name="Ishida J."/>
            <person name="Jiang P.X."/>
            <person name="Jones T."/>
            <person name="Kawai J."/>
            <person name="Kamiya A."/>
            <person name="Meyers C."/>
            <person name="Nakajima M."/>
            <person name="Narusaka M."/>
            <person name="Seki M."/>
            <person name="Sakurai T."/>
            <person name="Satou M."/>
            <person name="Tamse R."/>
            <person name="Vaysberg M."/>
            <person name="Wallender E.K."/>
            <person name="Wong C."/>
            <person name="Yamamura Y."/>
            <person name="Yuan S."/>
            <person name="Shinozaki K."/>
            <person name="Davis R.W."/>
            <person name="Theologis A."/>
            <person name="Ecker J.R."/>
        </authorList>
    </citation>
    <scope>NUCLEOTIDE SEQUENCE [LARGE SCALE MRNA] (ISOFORM 1)</scope>
    <source>
        <strain>cv. Columbia</strain>
    </source>
</reference>
<reference key="7">
    <citation type="journal article" date="2000" name="Biochem. Soc. Trans.">
        <title>The multigenic family of monogalactosyl diacylglycerol synthases.</title>
        <authorList>
            <person name="Marechal E."/>
            <person name="Awai K."/>
            <person name="Block M.A."/>
            <person name="Brun D."/>
            <person name="Masuda T."/>
            <person name="Shimada H."/>
            <person name="Takamiya K."/>
            <person name="Ohta H."/>
            <person name="Joyard J."/>
        </authorList>
    </citation>
    <scope>FUNCTION</scope>
    <scope>TISSUE SPECIFICITY</scope>
    <scope>CHARACTERIZATION</scope>
    <scope>SUBCELLULAR LOCATION</scope>
    <scope>NOMENCLATURE</scope>
</reference>
<reference key="8">
    <citation type="journal article" date="2004" name="Plant Physiol.">
        <title>Arabidopsis type B monogalactosyldiacylglycerol synthase genes are expressed during pollen tube growth and induced by phosphate starvation.</title>
        <authorList>
            <person name="Kobayashi K."/>
            <person name="Awai K."/>
            <person name="Takamiya K."/>
            <person name="Ohta H."/>
        </authorList>
    </citation>
    <scope>TISSUE SPECIFICITY</scope>
    <scope>INDUCTION BY LIGHT AND CYTOKININ</scope>
</reference>
<reference key="9">
    <citation type="journal article" date="2007" name="Proc. Natl. Acad. Sci. U.S.A.">
        <title>Galactolipid synthesis in chloroplast inner envelope is essential for proper thylakoid biogenesis, photosynthesis, and embryogenesis.</title>
        <authorList>
            <person name="Kobayashi K."/>
            <person name="Kondo M."/>
            <person name="Fukuda H."/>
            <person name="Nishimura M."/>
            <person name="Ohta H."/>
        </authorList>
    </citation>
    <scope>FUNCTION</scope>
    <scope>DEVELOPMENTAL STAGE</scope>
</reference>
<reference key="10">
    <citation type="journal article" date="2010" name="J. Biol. Chem.">
        <title>Activation of the chloroplast monogalactosyldiacylglycerol synthase MGD1 by phosphatidic acid and phosphatidylglycerol.</title>
        <authorList>
            <person name="Dubots E."/>
            <person name="Audry M."/>
            <person name="Yamaryo Y."/>
            <person name="Bastien O."/>
            <person name="Ohta H."/>
            <person name="Breton C."/>
            <person name="Marechal E."/>
            <person name="Block M.A."/>
        </authorList>
    </citation>
    <scope>CATALYTIC ACTIVITY</scope>
    <scope>ACTIVITY REGULATION</scope>
    <scope>MUTAGENESIS OF ASP-150; HIS-155; THR-186; PRO-189; HIS-251; ARG-260; TRP-287 AND GLU-456</scope>
</reference>
<reference key="11">
    <citation type="journal article" date="2011" name="Nat. Chem. Biol.">
        <title>Chemical inhibitors of monogalactosyldiacylglycerol synthases in Arabidopsis thaliana.</title>
        <authorList>
            <person name="Botte C.Y."/>
            <person name="Deligny M."/>
            <person name="Roccia A."/>
            <person name="Bonneau A.L."/>
            <person name="Saidani N."/>
            <person name="Hardre H."/>
            <person name="Aci S."/>
            <person name="Yamaryo-Botte Y."/>
            <person name="Jouhet J."/>
            <person name="Dubots E."/>
            <person name="Loizeau K."/>
            <person name="Bastien O."/>
            <person name="Brehelin L."/>
            <person name="Joyard J."/>
            <person name="Cintrat J.C."/>
            <person name="Falconet D."/>
            <person name="Block M.A."/>
            <person name="Rousseau B."/>
            <person name="Lopez R."/>
            <person name="Marechal E."/>
        </authorList>
    </citation>
    <scope>ACTIVITY REGULATION</scope>
</reference>
<reference key="12">
    <citation type="journal article" date="2014" name="Plant Physiol.">
        <title>Inducible knockdown of MONOGALACTOSYLDIACYLGLYCEROL SYNTHASE1 reveals roles of galactolipids in organelle differentiation in Arabidopsis cotyledons.</title>
        <authorList>
            <person name="Fujii S."/>
            <person name="Kobayashi K."/>
            <person name="Nakamura Y."/>
            <person name="Wada H."/>
        </authorList>
    </citation>
    <scope>FUNCTION</scope>
</reference>
<reference key="13">
    <citation type="journal article" date="2020" name="Glycobiology">
        <title>Mechanism of activation of plant monogalactosyldiacylglycerol synthase 1 (MGD1) by phosphatidylglycerol.</title>
        <authorList>
            <person name="Nitenberg M."/>
            <person name="Makshakova O."/>
            <person name="Rocha J."/>
            <person name="Perez S."/>
            <person name="Marechal E."/>
            <person name="Block M.A."/>
            <person name="Girard-Egrot A."/>
            <person name="Breton C."/>
        </authorList>
    </citation>
    <scope>PHOSPHATIDYLGLYCEROL-BINDING</scope>
</reference>
<reference key="14">
    <citation type="journal article" date="2016" name="Plant J.">
        <title>Structural insights and membrane binding properties of MGD1, the major galactolipid synthase in plants.</title>
        <authorList>
            <person name="Rocha J."/>
            <person name="Sarkis J."/>
            <person name="Thomas A."/>
            <person name="Pitou L."/>
            <person name="Radzimanowski J."/>
            <person name="Audry M."/>
            <person name="Chazalet V."/>
            <person name="de Sanctis D."/>
            <person name="Palcic M.M."/>
            <person name="Block M.A."/>
            <person name="Girard-Egrot A."/>
            <person name="Marechal E."/>
            <person name="Breton C."/>
        </authorList>
    </citation>
    <scope>X-RAY CRYSTALLOGRAPHY (2.25 ANGSTROMS) OF 137-533 IN COMPLEX WITH UDP</scope>
    <scope>CATALYTIC ACTIVITY</scope>
    <scope>REGION</scope>
    <scope>MUTAGENESIS OF 192-GLN--SER-214; ASP-279; LYS-430; PRO-433; THR-435; GLN-455 AND GLU-456</scope>
</reference>
<comment type="function">
    <text evidence="3 4 5 7 10">Involved in the synthesis of the major structural component of photosynthetic membranes. Required for proper thylakoid membrane biogenesis. Does not discriminate between prokaryotic (18:1/16:0) or eukaryotic (18:2/18:2) 1,2-diacylglycerol species, but operates with some preference for the prokaryotic one. Is responsible for most galactolipid synthesis in chloroplasts (PubMed:10869420, PubMed:11171188, PubMed:11553816, PubMed:17940034). Required for the formation of thylakoid membranes and functional photosynthetic electron transport during cotyledons greening in young seedlings (PubMed:25253888). May link galactolipid synthesis with the coordinated transcriptional regulation of chloroplasts and other organelles during cotyledon greening (PubMed:25253888).</text>
</comment>
<comment type="catalytic activity">
    <reaction evidence="8 11">
        <text>a 1,2-diacyl-sn-glycerol + UDP-alpha-D-galactose = a 1,2-diacyl-3-O-(beta-D-galactosyl)-sn-glycerol + UDP + H(+)</text>
        <dbReference type="Rhea" id="RHEA:14945"/>
        <dbReference type="ChEBI" id="CHEBI:15378"/>
        <dbReference type="ChEBI" id="CHEBI:17615"/>
        <dbReference type="ChEBI" id="CHEBI:17815"/>
        <dbReference type="ChEBI" id="CHEBI:58223"/>
        <dbReference type="ChEBI" id="CHEBI:66914"/>
        <dbReference type="EC" id="2.4.1.46"/>
    </reaction>
    <physiologicalReaction direction="left-to-right" evidence="8 11">
        <dbReference type="Rhea" id="RHEA:14946"/>
    </physiologicalReaction>
</comment>
<comment type="catalytic activity">
    <reaction evidence="5">
        <text>1,2-di-(9Z,12Z-octadecadienoyl)-sn-glycerol + UDP-alpha-D-galactose = 1,2-di-(9Z,12Z-octadecadienoyl)-3-beta-D-galactosyl-sn-glycerol + UDP + H(+)</text>
        <dbReference type="Rhea" id="RHEA:48492"/>
        <dbReference type="ChEBI" id="CHEBI:15378"/>
        <dbReference type="ChEBI" id="CHEBI:58223"/>
        <dbReference type="ChEBI" id="CHEBI:66914"/>
        <dbReference type="ChEBI" id="CHEBI:77127"/>
        <dbReference type="ChEBI" id="CHEBI:90506"/>
    </reaction>
    <physiologicalReaction direction="left-to-right" evidence="5">
        <dbReference type="Rhea" id="RHEA:48493"/>
    </physiologicalReaction>
</comment>
<comment type="catalytic activity">
    <reaction evidence="5">
        <text>1-(9Z-octadecenoyl)-2-hexadecanoyl-sn-glycerol + UDP-alpha-D-galactose = 1-(9Z-octadecenoyl)-2-hexadecanoyl-3-beta-D-galactosyl-sn-glycerol + UDP + H(+)</text>
        <dbReference type="Rhea" id="RHEA:48496"/>
        <dbReference type="ChEBI" id="CHEBI:15378"/>
        <dbReference type="ChEBI" id="CHEBI:58223"/>
        <dbReference type="ChEBI" id="CHEBI:66914"/>
        <dbReference type="ChEBI" id="CHEBI:75447"/>
        <dbReference type="ChEBI" id="CHEBI:90507"/>
    </reaction>
    <physiologicalReaction direction="left-to-right" evidence="5">
        <dbReference type="Rhea" id="RHEA:48497"/>
    </physiologicalReaction>
</comment>
<comment type="catalytic activity">
    <reaction evidence="8">
        <text>1,2-di-(9Z-octadecenoyl)-sn-glycerol + UDP-alpha-D-galactose = 1,2-di-(9Z-octadecenoyl)-3-beta-D-galactosyl-sn-glycerol + UDP + H(+)</text>
        <dbReference type="Rhea" id="RHEA:48480"/>
        <dbReference type="ChEBI" id="CHEBI:15378"/>
        <dbReference type="ChEBI" id="CHEBI:52333"/>
        <dbReference type="ChEBI" id="CHEBI:58223"/>
        <dbReference type="ChEBI" id="CHEBI:63775"/>
        <dbReference type="ChEBI" id="CHEBI:66914"/>
    </reaction>
    <physiologicalReaction direction="left-to-right" evidence="8">
        <dbReference type="Rhea" id="RHEA:48481"/>
    </physiologicalReaction>
</comment>
<comment type="activity regulation">
    <text evidence="8 9">Activated by phosphatidate (PA) and phosphatidylglycerol (PG) (PubMed:20023301). Inhibited by galvestine-1 (PubMed:21946275).</text>
</comment>
<comment type="biophysicochemical properties">
    <phDependence>
        <text>Optimum pH is 7.5.</text>
    </phDependence>
</comment>
<comment type="subunit">
    <text evidence="1">Homodimer.</text>
</comment>
<comment type="subcellular location">
    <subcellularLocation>
        <location evidence="16 17">Plastid</location>
        <location evidence="16 17">Chloroplast inner membrane</location>
    </subcellularLocation>
</comment>
<comment type="alternative products">
    <event type="alternative splicing"/>
    <isoform>
        <id>O81770-1</id>
        <name>1</name>
        <sequence type="displayed"/>
    </isoform>
    <isoform>
        <id>O81770-2</id>
        <name>2</name>
        <sequence type="described" ref="VSP_035387 VSP_035388"/>
    </isoform>
</comment>
<comment type="tissue specificity">
    <text evidence="4 5 6">Expressed in roots, stems, leaves, flowers, siliques and seeds.</text>
</comment>
<comment type="developmental stage">
    <text evidence="5 7">Highly expressed throughout whole developmental stages. Transient increase in embryos at the globular stage.</text>
</comment>
<comment type="induction">
    <text evidence="5 6">Induced by illumination and cytokinin treatment in etiolated seedlings. Not induced by phosphate deprivation.</text>
</comment>
<comment type="disruption phenotype">
    <text evidence="3">Plants show defects in chloroplast biogenesis and a dwarf and albino phenotype. The amount of monogalactosyldiacylglycerol was reduced by 98% in the mutant leaves, indicating that MGD2 or MGD3 cannot compensate for loss of MGD1 function.</text>
</comment>
<comment type="similarity">
    <text evidence="15">Belongs to the glycosyltransferase 28 family.</text>
</comment>
<name>MGDG1_ARATH</name>
<proteinExistence type="evidence at protein level"/>
<accession>O81770</accession>
<accession>Q3E9T1</accession>
<accession>Q9MU68</accession>
<accession>W8Q2X7</accession>
<gene>
    <name evidence="13" type="primary">MGD1</name>
    <name evidence="15" type="synonym">EMB2797</name>
    <name evidence="14" type="synonym">MGDA</name>
    <name evidence="18" type="ordered locus">At4g31780</name>
    <name evidence="19" type="ORF">F28M20.30</name>
</gene>